<comment type="function">
    <text evidence="1">Type-I myosin implicated in the organization of the actin cytoskeleton. Required for proper actin cytoskeleton polarization. At the cell cortex, assembles in patch-like structures together with proteins from the actin-polymerizing machinery and promotes actin assembly. Functions as actin nucleation-promoting factor (NPF) for the Arp2/3 complex (By similarity).</text>
</comment>
<comment type="subcellular location">
    <subcellularLocation>
        <location evidence="1">Cytoplasm</location>
        <location evidence="1">Cytoskeleton</location>
        <location evidence="1">Actin patch</location>
    </subcellularLocation>
</comment>
<comment type="domain">
    <text evidence="1">The myosin motor domain displays actin-stimulated ATPase activity and generates a mechanochemical force.</text>
</comment>
<comment type="domain">
    <text evidence="1">The tail domain participates in molecular interactions that specify the role of the motor domain (By similarity). It is composed of several tail homology (TH) domains, namely a putative phospholipid-binding myosin tail domain (also named TH1), an Ala- and Pro-rich domain (TH2), followed by an SH3 domain and a C-terminal acidic domain (TH3).</text>
</comment>
<comment type="PTM">
    <text evidence="1">Phosphorylation of the TEDS site (Ser-358) is required for the polarization of the actin cytoskeleton. Phosphorylation probably activates the myosin-I ATPase activity (By similarity).</text>
</comment>
<comment type="similarity">
    <text evidence="7">Belongs to the TRAFAC class myosin-kinesin ATPase superfamily. Myosin family.</text>
</comment>
<dbReference type="EMBL" id="CR380957">
    <property type="protein sequence ID" value="CAG61337.1"/>
    <property type="molecule type" value="Genomic_DNA"/>
</dbReference>
<dbReference type="RefSeq" id="XP_448376.1">
    <property type="nucleotide sequence ID" value="XM_448376.1"/>
</dbReference>
<dbReference type="SMR" id="Q6FN18"/>
<dbReference type="FunCoup" id="Q6FN18">
    <property type="interactions" value="326"/>
</dbReference>
<dbReference type="STRING" id="284593.Q6FN18"/>
<dbReference type="EnsemblFungi" id="CAGL0K03487g-T">
    <property type="protein sequence ID" value="CAGL0K03487g-T-p1"/>
    <property type="gene ID" value="CAGL0K03487g"/>
</dbReference>
<dbReference type="KEGG" id="cgr:2890177"/>
<dbReference type="CGD" id="CAL0134571">
    <property type="gene designation" value="CAGL0K03487g"/>
</dbReference>
<dbReference type="VEuPathDB" id="FungiDB:CAGL0K03487g"/>
<dbReference type="eggNOG" id="KOG0162">
    <property type="taxonomic scope" value="Eukaryota"/>
</dbReference>
<dbReference type="HOGENOM" id="CLU_000192_7_6_1"/>
<dbReference type="InParanoid" id="Q6FN18"/>
<dbReference type="OMA" id="NDQENQC"/>
<dbReference type="Proteomes" id="UP000002428">
    <property type="component" value="Chromosome K"/>
</dbReference>
<dbReference type="GO" id="GO:0030479">
    <property type="term" value="C:actin cortical patch"/>
    <property type="evidence" value="ECO:0007669"/>
    <property type="project" value="UniProtKB-SubCell"/>
</dbReference>
<dbReference type="GO" id="GO:0051286">
    <property type="term" value="C:cell tip"/>
    <property type="evidence" value="ECO:0007669"/>
    <property type="project" value="TreeGrafter"/>
</dbReference>
<dbReference type="GO" id="GO:0016459">
    <property type="term" value="C:myosin complex"/>
    <property type="evidence" value="ECO:0007669"/>
    <property type="project" value="UniProtKB-KW"/>
</dbReference>
<dbReference type="GO" id="GO:0005886">
    <property type="term" value="C:plasma membrane"/>
    <property type="evidence" value="ECO:0007669"/>
    <property type="project" value="TreeGrafter"/>
</dbReference>
<dbReference type="GO" id="GO:0051015">
    <property type="term" value="F:actin filament binding"/>
    <property type="evidence" value="ECO:0007669"/>
    <property type="project" value="TreeGrafter"/>
</dbReference>
<dbReference type="GO" id="GO:0005524">
    <property type="term" value="F:ATP binding"/>
    <property type="evidence" value="ECO:0007669"/>
    <property type="project" value="UniProtKB-KW"/>
</dbReference>
<dbReference type="GO" id="GO:0016787">
    <property type="term" value="F:hydrolase activity"/>
    <property type="evidence" value="ECO:0007669"/>
    <property type="project" value="UniProtKB-KW"/>
</dbReference>
<dbReference type="GO" id="GO:0000146">
    <property type="term" value="F:microfilament motor activity"/>
    <property type="evidence" value="ECO:0007669"/>
    <property type="project" value="TreeGrafter"/>
</dbReference>
<dbReference type="GO" id="GO:0051666">
    <property type="term" value="P:actin cortical patch localization"/>
    <property type="evidence" value="ECO:0007669"/>
    <property type="project" value="TreeGrafter"/>
</dbReference>
<dbReference type="GO" id="GO:0007015">
    <property type="term" value="P:actin filament organization"/>
    <property type="evidence" value="ECO:0007669"/>
    <property type="project" value="TreeGrafter"/>
</dbReference>
<dbReference type="GO" id="GO:0006897">
    <property type="term" value="P:endocytosis"/>
    <property type="evidence" value="ECO:0007669"/>
    <property type="project" value="TreeGrafter"/>
</dbReference>
<dbReference type="CDD" id="cd01378">
    <property type="entry name" value="MYSc_Myo1"/>
    <property type="match status" value="1"/>
</dbReference>
<dbReference type="CDD" id="cd11858">
    <property type="entry name" value="SH3_Myosin-I_fungi"/>
    <property type="match status" value="1"/>
</dbReference>
<dbReference type="FunFam" id="1.10.10.820:FF:000001">
    <property type="entry name" value="Myosin heavy chain"/>
    <property type="match status" value="1"/>
</dbReference>
<dbReference type="FunFam" id="1.20.120.720:FF:000015">
    <property type="entry name" value="Myosin I"/>
    <property type="match status" value="1"/>
</dbReference>
<dbReference type="FunFam" id="1.20.5.4820:FF:000004">
    <property type="entry name" value="Myosin IE"/>
    <property type="match status" value="1"/>
</dbReference>
<dbReference type="FunFam" id="1.20.58.530:FF:000007">
    <property type="entry name" value="Myosin IE"/>
    <property type="match status" value="1"/>
</dbReference>
<dbReference type="Gene3D" id="1.10.10.820">
    <property type="match status" value="1"/>
</dbReference>
<dbReference type="Gene3D" id="1.20.5.4820">
    <property type="match status" value="1"/>
</dbReference>
<dbReference type="Gene3D" id="1.20.58.530">
    <property type="match status" value="1"/>
</dbReference>
<dbReference type="Gene3D" id="3.40.850.10">
    <property type="entry name" value="Kinesin motor domain"/>
    <property type="match status" value="1"/>
</dbReference>
<dbReference type="Gene3D" id="1.20.120.720">
    <property type="entry name" value="Myosin VI head, motor domain, U50 subdomain"/>
    <property type="match status" value="1"/>
</dbReference>
<dbReference type="Gene3D" id="2.30.30.40">
    <property type="entry name" value="SH3 Domains"/>
    <property type="match status" value="1"/>
</dbReference>
<dbReference type="InterPro" id="IPR035535">
    <property type="entry name" value="Fungal_myosin-I_SH3"/>
</dbReference>
<dbReference type="InterPro" id="IPR036961">
    <property type="entry name" value="Kinesin_motor_dom_sf"/>
</dbReference>
<dbReference type="InterPro" id="IPR001609">
    <property type="entry name" value="Myosin_head_motor_dom-like"/>
</dbReference>
<dbReference type="InterPro" id="IPR010926">
    <property type="entry name" value="Myosin_TH1"/>
</dbReference>
<dbReference type="InterPro" id="IPR036072">
    <property type="entry name" value="MYSc_Myo1"/>
</dbReference>
<dbReference type="InterPro" id="IPR027417">
    <property type="entry name" value="P-loop_NTPase"/>
</dbReference>
<dbReference type="InterPro" id="IPR036028">
    <property type="entry name" value="SH3-like_dom_sf"/>
</dbReference>
<dbReference type="InterPro" id="IPR001452">
    <property type="entry name" value="SH3_domain"/>
</dbReference>
<dbReference type="PANTHER" id="PTHR13140">
    <property type="entry name" value="MYOSIN"/>
    <property type="match status" value="1"/>
</dbReference>
<dbReference type="PANTHER" id="PTHR13140:SF837">
    <property type="entry name" value="MYOSIN-3-RELATED"/>
    <property type="match status" value="1"/>
</dbReference>
<dbReference type="Pfam" id="PF00063">
    <property type="entry name" value="Myosin_head"/>
    <property type="match status" value="1"/>
</dbReference>
<dbReference type="Pfam" id="PF06017">
    <property type="entry name" value="Myosin_TH1"/>
    <property type="match status" value="1"/>
</dbReference>
<dbReference type="Pfam" id="PF00018">
    <property type="entry name" value="SH3_1"/>
    <property type="match status" value="1"/>
</dbReference>
<dbReference type="PRINTS" id="PR00193">
    <property type="entry name" value="MYOSINHEAVY"/>
</dbReference>
<dbReference type="SMART" id="SM00242">
    <property type="entry name" value="MYSc"/>
    <property type="match status" value="1"/>
</dbReference>
<dbReference type="SMART" id="SM00326">
    <property type="entry name" value="SH3"/>
    <property type="match status" value="1"/>
</dbReference>
<dbReference type="SUPFAM" id="SSF52540">
    <property type="entry name" value="P-loop containing nucleoside triphosphate hydrolases"/>
    <property type="match status" value="1"/>
</dbReference>
<dbReference type="SUPFAM" id="SSF50044">
    <property type="entry name" value="SH3-domain"/>
    <property type="match status" value="1"/>
</dbReference>
<dbReference type="PROSITE" id="PS51456">
    <property type="entry name" value="MYOSIN_MOTOR"/>
    <property type="match status" value="1"/>
</dbReference>
<dbReference type="PROSITE" id="PS50002">
    <property type="entry name" value="SH3"/>
    <property type="match status" value="1"/>
</dbReference>
<dbReference type="PROSITE" id="PS51757">
    <property type="entry name" value="TH1"/>
    <property type="match status" value="1"/>
</dbReference>
<organism>
    <name type="scientific">Candida glabrata (strain ATCC 2001 / BCRC 20586 / JCM 3761 / NBRC 0622 / NRRL Y-65 / CBS 138)</name>
    <name type="common">Yeast</name>
    <name type="synonym">Nakaseomyces glabratus</name>
    <dbReference type="NCBI Taxonomy" id="284593"/>
    <lineage>
        <taxon>Eukaryota</taxon>
        <taxon>Fungi</taxon>
        <taxon>Dikarya</taxon>
        <taxon>Ascomycota</taxon>
        <taxon>Saccharomycotina</taxon>
        <taxon>Saccharomycetes</taxon>
        <taxon>Saccharomycetales</taxon>
        <taxon>Saccharomycetaceae</taxon>
        <taxon>Nakaseomyces</taxon>
    </lineage>
</organism>
<gene>
    <name type="primary">MYO5</name>
    <name type="ordered locus">CAGL0K03487g</name>
</gene>
<feature type="chain" id="PRO_0000338545" description="Myosin-5">
    <location>
        <begin position="1"/>
        <end position="1217"/>
    </location>
</feature>
<feature type="domain" description="Myosin motor" evidence="4">
    <location>
        <begin position="37"/>
        <end position="716"/>
    </location>
</feature>
<feature type="domain" description="IQ 1">
    <location>
        <begin position="720"/>
        <end position="740"/>
    </location>
</feature>
<feature type="domain" description="IQ 2">
    <location>
        <begin position="741"/>
        <end position="766"/>
    </location>
</feature>
<feature type="domain" description="TH1" evidence="5">
    <location>
        <begin position="772"/>
        <end position="962"/>
    </location>
</feature>
<feature type="domain" description="SH3" evidence="3">
    <location>
        <begin position="1083"/>
        <end position="1145"/>
    </location>
</feature>
<feature type="region of interest" description="Disordered" evidence="6">
    <location>
        <begin position="1"/>
        <end position="24"/>
    </location>
</feature>
<feature type="region of interest" description="Actin-binding" evidence="1">
    <location>
        <begin position="405"/>
        <end position="487"/>
    </location>
</feature>
<feature type="region of interest" description="Disordered" evidence="6">
    <location>
        <begin position="956"/>
        <end position="1102"/>
    </location>
</feature>
<feature type="region of interest" description="Disordered" evidence="6">
    <location>
        <begin position="1145"/>
        <end position="1174"/>
    </location>
</feature>
<feature type="region of interest" description="Disordered" evidence="6">
    <location>
        <begin position="1197"/>
        <end position="1217"/>
    </location>
</feature>
<feature type="compositionally biased region" description="Basic residues" evidence="6">
    <location>
        <begin position="1"/>
        <end position="11"/>
    </location>
</feature>
<feature type="compositionally biased region" description="Basic residues" evidence="6">
    <location>
        <begin position="965"/>
        <end position="974"/>
    </location>
</feature>
<feature type="compositionally biased region" description="Polar residues" evidence="6">
    <location>
        <begin position="976"/>
        <end position="987"/>
    </location>
</feature>
<feature type="compositionally biased region" description="Low complexity" evidence="6">
    <location>
        <begin position="994"/>
        <end position="1007"/>
    </location>
</feature>
<feature type="compositionally biased region" description="Pro residues" evidence="6">
    <location>
        <begin position="1025"/>
        <end position="1038"/>
    </location>
</feature>
<feature type="compositionally biased region" description="Low complexity" evidence="6">
    <location>
        <begin position="1050"/>
        <end position="1071"/>
    </location>
</feature>
<feature type="compositionally biased region" description="Pro residues" evidence="6">
    <location>
        <begin position="1072"/>
        <end position="1081"/>
    </location>
</feature>
<feature type="compositionally biased region" description="Polar residues" evidence="6">
    <location>
        <begin position="1162"/>
        <end position="1174"/>
    </location>
</feature>
<feature type="compositionally biased region" description="Acidic residues" evidence="6">
    <location>
        <begin position="1203"/>
        <end position="1217"/>
    </location>
</feature>
<feature type="binding site" evidence="2">
    <location>
        <begin position="130"/>
        <end position="137"/>
    </location>
    <ligand>
        <name>ATP</name>
        <dbReference type="ChEBI" id="CHEBI:30616"/>
    </ligand>
</feature>
<feature type="modified residue" description="Phosphoserine" evidence="1">
    <location>
        <position position="358"/>
    </location>
</feature>
<proteinExistence type="inferred from homology"/>
<evidence type="ECO:0000250" key="1"/>
<evidence type="ECO:0000255" key="2"/>
<evidence type="ECO:0000255" key="3">
    <source>
        <dbReference type="PROSITE-ProRule" id="PRU00192"/>
    </source>
</evidence>
<evidence type="ECO:0000255" key="4">
    <source>
        <dbReference type="PROSITE-ProRule" id="PRU00782"/>
    </source>
</evidence>
<evidence type="ECO:0000255" key="5">
    <source>
        <dbReference type="PROSITE-ProRule" id="PRU01093"/>
    </source>
</evidence>
<evidence type="ECO:0000256" key="6">
    <source>
        <dbReference type="SAM" id="MobiDB-lite"/>
    </source>
</evidence>
<evidence type="ECO:0000305" key="7"/>
<reference key="1">
    <citation type="journal article" date="2004" name="Nature">
        <title>Genome evolution in yeasts.</title>
        <authorList>
            <person name="Dujon B."/>
            <person name="Sherman D."/>
            <person name="Fischer G."/>
            <person name="Durrens P."/>
            <person name="Casaregola S."/>
            <person name="Lafontaine I."/>
            <person name="de Montigny J."/>
            <person name="Marck C."/>
            <person name="Neuveglise C."/>
            <person name="Talla E."/>
            <person name="Goffard N."/>
            <person name="Frangeul L."/>
            <person name="Aigle M."/>
            <person name="Anthouard V."/>
            <person name="Babour A."/>
            <person name="Barbe V."/>
            <person name="Barnay S."/>
            <person name="Blanchin S."/>
            <person name="Beckerich J.-M."/>
            <person name="Beyne E."/>
            <person name="Bleykasten C."/>
            <person name="Boisrame A."/>
            <person name="Boyer J."/>
            <person name="Cattolico L."/>
            <person name="Confanioleri F."/>
            <person name="de Daruvar A."/>
            <person name="Despons L."/>
            <person name="Fabre E."/>
            <person name="Fairhead C."/>
            <person name="Ferry-Dumazet H."/>
            <person name="Groppi A."/>
            <person name="Hantraye F."/>
            <person name="Hennequin C."/>
            <person name="Jauniaux N."/>
            <person name="Joyet P."/>
            <person name="Kachouri R."/>
            <person name="Kerrest A."/>
            <person name="Koszul R."/>
            <person name="Lemaire M."/>
            <person name="Lesur I."/>
            <person name="Ma L."/>
            <person name="Muller H."/>
            <person name="Nicaud J.-M."/>
            <person name="Nikolski M."/>
            <person name="Oztas S."/>
            <person name="Ozier-Kalogeropoulos O."/>
            <person name="Pellenz S."/>
            <person name="Potier S."/>
            <person name="Richard G.-F."/>
            <person name="Straub M.-L."/>
            <person name="Suleau A."/>
            <person name="Swennen D."/>
            <person name="Tekaia F."/>
            <person name="Wesolowski-Louvel M."/>
            <person name="Westhof E."/>
            <person name="Wirth B."/>
            <person name="Zeniou-Meyer M."/>
            <person name="Zivanovic Y."/>
            <person name="Bolotin-Fukuhara M."/>
            <person name="Thierry A."/>
            <person name="Bouchier C."/>
            <person name="Caudron B."/>
            <person name="Scarpelli C."/>
            <person name="Gaillardin C."/>
            <person name="Weissenbach J."/>
            <person name="Wincker P."/>
            <person name="Souciet J.-L."/>
        </authorList>
    </citation>
    <scope>NUCLEOTIDE SEQUENCE [LARGE SCALE GENOMIC DNA]</scope>
    <source>
        <strain>ATCC 2001 / BCRC 20586 / JCM 3761 / NBRC 0622 / NRRL Y-65 / CBS 138</strain>
    </source>
</reference>
<accession>Q6FN18</accession>
<sequence>MAILKRGARNKTHQEPAKRGGNNIKKAAFETSKKKEVGVSDLTLLTSISDESINDNLKKRFLNGTIYTYIGHVLISVNPFRDLGIYTDAIMKSYQGKNRLEVPPHVYAISEAMYYNLKAYNENQCVIISGESGAGKTEAAKKIMEYIAATSSTHSESIGKIKDMVLATNPLLESFGCAKTLRNNNSSRHGKYLEIRFNSQFEPCAGNITNYLLEKQRVVGQITNERNFHIFYQFTKGASDNYRQTFGVQLPEQYVYTSASKCTSVDTIDDVKDFEATIKAMQVIGLAQEEQDQIFRMLAAILWIGNISFIENEEGNAQVRDTSVTDFVAYLLQVDSQSLIKALVERIVETNHGSRRGSVYHVPLNIVQATAVRDALAKAIYNNLFEWIVDRVNKSLHAYPGADKSIGILDIYGFEIFEHNSFEQICINYVNEKLQQIFIQLTLKSEQDTYAREKIQWTPIKYFDNKVVCDLIEAKRPPGIFAAMNDSVATAHADSSAADQAFAQRLSLFSSNPHFEQRQNKFVIKHYAGDVTYDVLGMTDKNKDQLQKDLVELVGTTTNAFLTTLFPNQVDKDNKRRPPTAGDKIIKSANELVETLSKAQPSYIRTIKPNQTKSPNDYDDHQVLHQVKYLGLQENVRIRRAGFAYRQGFEKFVERFYLLSPRCSYAGDYTWTGDILEAVRLILQDALIPEKEYQLGVTQVFIKTPETLFALENMRDKFWHNMAARIQRAWRRYLQRRIDAAVKIQRTIKERKEGNKFEKLRDYGTSLLGNKKERRSMSLLGYRAFMGDYLSCNESKSNGSYIKRQAGISEKVVFSFHGEALHSKFGRSAQRLKKTFILSPTTLYIIGQVRVQNAMQYTADYKINVNSILQLNMTNLQDDWVGIVLANSSMPDPLINLSFKTELITHLKTLNSKIQVKVGPTLEYQKKPGKMHSVKCQVSDTAPKYGDVYKSSTIFVRRGNPANSKSKKKPRKKSSGMSAPTTQSSKTLAPPRMSSNNQNTTVSQSLNGGMNVKPQTPASRSAKKPAPPPPGSKKPAPQPMAKKPAPHPTPQAQMQTQTQIPASQSSATQSSIPPPPPPPPSKTSEPQFEAAYDFPGSGNPSELPLMKGDIVYITKEEPSGWSLAKTLDGSKSGWVPTAYMVKHEGAKAPPPAPAVTASQPAIQNQSQPASAQTVAATSQVPASFGDGLVSALAARANKMRVESDEEAAASSDNDDDW</sequence>
<protein>
    <recommendedName>
        <fullName>Myosin-5</fullName>
    </recommendedName>
    <alternativeName>
        <fullName>Class I unconventional myosin MYO5</fullName>
    </alternativeName>
    <alternativeName>
        <fullName>Type I myosin MYO5</fullName>
    </alternativeName>
</protein>
<keyword id="KW-0009">Actin-binding</keyword>
<keyword id="KW-0067">ATP-binding</keyword>
<keyword id="KW-0963">Cytoplasm</keyword>
<keyword id="KW-0206">Cytoskeleton</keyword>
<keyword id="KW-0378">Hydrolase</keyword>
<keyword id="KW-0505">Motor protein</keyword>
<keyword id="KW-0518">Myosin</keyword>
<keyword id="KW-0547">Nucleotide-binding</keyword>
<keyword id="KW-0597">Phosphoprotein</keyword>
<keyword id="KW-1185">Reference proteome</keyword>
<keyword id="KW-0677">Repeat</keyword>
<keyword id="KW-0728">SH3 domain</keyword>
<name>MYO5_CANGA</name>